<reference key="1">
    <citation type="journal article" date="2005" name="Nature">
        <title>Sequencing of Aspergillus nidulans and comparative analysis with A. fumigatus and A. oryzae.</title>
        <authorList>
            <person name="Galagan J.E."/>
            <person name="Calvo S.E."/>
            <person name="Cuomo C."/>
            <person name="Ma L.-J."/>
            <person name="Wortman J.R."/>
            <person name="Batzoglou S."/>
            <person name="Lee S.-I."/>
            <person name="Bastuerkmen M."/>
            <person name="Spevak C.C."/>
            <person name="Clutterbuck J."/>
            <person name="Kapitonov V."/>
            <person name="Jurka J."/>
            <person name="Scazzocchio C."/>
            <person name="Farman M.L."/>
            <person name="Butler J."/>
            <person name="Purcell S."/>
            <person name="Harris S."/>
            <person name="Braus G.H."/>
            <person name="Draht O."/>
            <person name="Busch S."/>
            <person name="D'Enfert C."/>
            <person name="Bouchier C."/>
            <person name="Goldman G.H."/>
            <person name="Bell-Pedersen D."/>
            <person name="Griffiths-Jones S."/>
            <person name="Doonan J.H."/>
            <person name="Yu J."/>
            <person name="Vienken K."/>
            <person name="Pain A."/>
            <person name="Freitag M."/>
            <person name="Selker E.U."/>
            <person name="Archer D.B."/>
            <person name="Penalva M.A."/>
            <person name="Oakley B.R."/>
            <person name="Momany M."/>
            <person name="Tanaka T."/>
            <person name="Kumagai T."/>
            <person name="Asai K."/>
            <person name="Machida M."/>
            <person name="Nierman W.C."/>
            <person name="Denning D.W."/>
            <person name="Caddick M.X."/>
            <person name="Hynes M."/>
            <person name="Paoletti M."/>
            <person name="Fischer R."/>
            <person name="Miller B.L."/>
            <person name="Dyer P.S."/>
            <person name="Sachs M.S."/>
            <person name="Osmani S.A."/>
            <person name="Birren B.W."/>
        </authorList>
    </citation>
    <scope>NUCLEOTIDE SEQUENCE [LARGE SCALE GENOMIC DNA]</scope>
    <source>
        <strain>FGSC A4 / ATCC 38163 / CBS 112.46 / NRRL 194 / M139</strain>
    </source>
</reference>
<reference key="2">
    <citation type="journal article" date="2009" name="Fungal Genet. Biol.">
        <title>The 2008 update of the Aspergillus nidulans genome annotation: a community effort.</title>
        <authorList>
            <person name="Wortman J.R."/>
            <person name="Gilsenan J.M."/>
            <person name="Joardar V."/>
            <person name="Deegan J."/>
            <person name="Clutterbuck J."/>
            <person name="Andersen M.R."/>
            <person name="Archer D."/>
            <person name="Bencina M."/>
            <person name="Braus G."/>
            <person name="Coutinho P."/>
            <person name="von Dohren H."/>
            <person name="Doonan J."/>
            <person name="Driessen A.J."/>
            <person name="Durek P."/>
            <person name="Espeso E."/>
            <person name="Fekete E."/>
            <person name="Flipphi M."/>
            <person name="Estrada C.G."/>
            <person name="Geysens S."/>
            <person name="Goldman G."/>
            <person name="de Groot P.W."/>
            <person name="Hansen K."/>
            <person name="Harris S.D."/>
            <person name="Heinekamp T."/>
            <person name="Helmstaedt K."/>
            <person name="Henrissat B."/>
            <person name="Hofmann G."/>
            <person name="Homan T."/>
            <person name="Horio T."/>
            <person name="Horiuchi H."/>
            <person name="James S."/>
            <person name="Jones M."/>
            <person name="Karaffa L."/>
            <person name="Karanyi Z."/>
            <person name="Kato M."/>
            <person name="Keller N."/>
            <person name="Kelly D.E."/>
            <person name="Kiel J.A."/>
            <person name="Kim J.M."/>
            <person name="van der Klei I.J."/>
            <person name="Klis F.M."/>
            <person name="Kovalchuk A."/>
            <person name="Krasevec N."/>
            <person name="Kubicek C.P."/>
            <person name="Liu B."/>
            <person name="Maccabe A."/>
            <person name="Meyer V."/>
            <person name="Mirabito P."/>
            <person name="Miskei M."/>
            <person name="Mos M."/>
            <person name="Mullins J."/>
            <person name="Nelson D.R."/>
            <person name="Nielsen J."/>
            <person name="Oakley B.R."/>
            <person name="Osmani S.A."/>
            <person name="Pakula T."/>
            <person name="Paszewski A."/>
            <person name="Paulsen I."/>
            <person name="Pilsyk S."/>
            <person name="Pocsi I."/>
            <person name="Punt P.J."/>
            <person name="Ram A.F."/>
            <person name="Ren Q."/>
            <person name="Robellet X."/>
            <person name="Robson G."/>
            <person name="Seiboth B."/>
            <person name="van Solingen P."/>
            <person name="Specht T."/>
            <person name="Sun J."/>
            <person name="Taheri-Talesh N."/>
            <person name="Takeshita N."/>
            <person name="Ussery D."/>
            <person name="vanKuyk P.A."/>
            <person name="Visser H."/>
            <person name="van de Vondervoort P.J."/>
            <person name="de Vries R.P."/>
            <person name="Walton J."/>
            <person name="Xiang X."/>
            <person name="Xiong Y."/>
            <person name="Zeng A.P."/>
            <person name="Brandt B.W."/>
            <person name="Cornell M.J."/>
            <person name="van den Hondel C.A."/>
            <person name="Visser J."/>
            <person name="Oliver S.G."/>
            <person name="Turner G."/>
        </authorList>
    </citation>
    <scope>GENOME REANNOTATION</scope>
    <source>
        <strain>FGSC A4 / ATCC 38163 / CBS 112.46 / NRRL 194 / M139</strain>
    </source>
</reference>
<keyword id="KW-0010">Activator</keyword>
<keyword id="KW-0156">Chromatin regulator</keyword>
<keyword id="KW-0175">Coiled coil</keyword>
<keyword id="KW-0963">Cytoplasm</keyword>
<keyword id="KW-0227">DNA damage</keyword>
<keyword id="KW-0234">DNA repair</keyword>
<keyword id="KW-0539">Nucleus</keyword>
<keyword id="KW-1185">Reference proteome</keyword>
<keyword id="KW-0804">Transcription</keyword>
<keyword id="KW-0805">Transcription regulation</keyword>
<comment type="function">
    <text evidence="1">Component of the SWR1 complex which mediates the ATP-dependent exchange of histone H2A for the H2A variant HZT1 leading to transcriptional regulation of selected genes by chromatin remodeling. Component of the NuA4 histone acetyltransferase complex which is involved in transcriptional activation of selected genes principally by acetylation of nucleosomal histones H4 and H2A. The NuA4 complex is also involved in DNA repair. Yaf9 may also be required for viability in conditions in which the structural integrity of the spindle is compromised (By similarity).</text>
</comment>
<comment type="subunit">
    <text evidence="1">Component of the SWR1 chromatin-remodeling complex and of the NuA4 histone acetyltransferase complex.</text>
</comment>
<comment type="subcellular location">
    <subcellularLocation>
        <location evidence="1">Cytoplasm</location>
    </subcellularLocation>
    <subcellularLocation>
        <location evidence="3">Nucleus</location>
    </subcellularLocation>
</comment>
<comment type="domain">
    <text evidence="1">The coiled-coil domain is required for assembly into the NuA4 complex.</text>
</comment>
<comment type="similarity">
    <text evidence="5">Belongs to the YAF9 family.</text>
</comment>
<evidence type="ECO:0000250" key="1"/>
<evidence type="ECO:0000255" key="2"/>
<evidence type="ECO:0000255" key="3">
    <source>
        <dbReference type="PROSITE-ProRule" id="PRU00376"/>
    </source>
</evidence>
<evidence type="ECO:0000256" key="4">
    <source>
        <dbReference type="SAM" id="MobiDB-lite"/>
    </source>
</evidence>
<evidence type="ECO:0000305" key="5"/>
<accession>Q5BC71</accession>
<accession>C8VKF8</accession>
<name>AF9_EMENI</name>
<dbReference type="EMBL" id="AACD01000029">
    <property type="protein sequence ID" value="EAA65024.1"/>
    <property type="molecule type" value="Genomic_DNA"/>
</dbReference>
<dbReference type="EMBL" id="BN001307">
    <property type="protein sequence ID" value="CBF85706.1"/>
    <property type="molecule type" value="Genomic_DNA"/>
</dbReference>
<dbReference type="RefSeq" id="XP_659463.1">
    <property type="nucleotide sequence ID" value="XM_654371.1"/>
</dbReference>
<dbReference type="SMR" id="Q5BC71"/>
<dbReference type="FunCoup" id="Q5BC71">
    <property type="interactions" value="687"/>
</dbReference>
<dbReference type="STRING" id="227321.Q5BC71"/>
<dbReference type="EnsemblFungi" id="CBF85706">
    <property type="protein sequence ID" value="CBF85706"/>
    <property type="gene ID" value="ANIA_01859"/>
</dbReference>
<dbReference type="KEGG" id="ani:ANIA_01859"/>
<dbReference type="VEuPathDB" id="FungiDB:AN1859"/>
<dbReference type="eggNOG" id="KOG3149">
    <property type="taxonomic scope" value="Eukaryota"/>
</dbReference>
<dbReference type="HOGENOM" id="CLU_051385_2_0_1"/>
<dbReference type="InParanoid" id="Q5BC71"/>
<dbReference type="OMA" id="EDHTHQW"/>
<dbReference type="OrthoDB" id="16041at2759"/>
<dbReference type="Proteomes" id="UP000000560">
    <property type="component" value="Chromosome VII"/>
</dbReference>
<dbReference type="GO" id="GO:0000781">
    <property type="term" value="C:chromosome, telomeric region"/>
    <property type="evidence" value="ECO:0007669"/>
    <property type="project" value="GOC"/>
</dbReference>
<dbReference type="GO" id="GO:0005737">
    <property type="term" value="C:cytoplasm"/>
    <property type="evidence" value="ECO:0007669"/>
    <property type="project" value="UniProtKB-SubCell"/>
</dbReference>
<dbReference type="GO" id="GO:0035267">
    <property type="term" value="C:NuA4 histone acetyltransferase complex"/>
    <property type="evidence" value="ECO:0000318"/>
    <property type="project" value="GO_Central"/>
</dbReference>
<dbReference type="GO" id="GO:0005634">
    <property type="term" value="C:nucleus"/>
    <property type="evidence" value="ECO:0000318"/>
    <property type="project" value="GO_Central"/>
</dbReference>
<dbReference type="GO" id="GO:0000812">
    <property type="term" value="C:Swr1 complex"/>
    <property type="evidence" value="ECO:0000318"/>
    <property type="project" value="GO_Central"/>
</dbReference>
<dbReference type="GO" id="GO:0042393">
    <property type="term" value="F:histone binding"/>
    <property type="evidence" value="ECO:0000318"/>
    <property type="project" value="GO_Central"/>
</dbReference>
<dbReference type="GO" id="GO:0006338">
    <property type="term" value="P:chromatin remodeling"/>
    <property type="evidence" value="ECO:0000318"/>
    <property type="project" value="GO_Central"/>
</dbReference>
<dbReference type="GO" id="GO:0006281">
    <property type="term" value="P:DNA repair"/>
    <property type="evidence" value="ECO:0007669"/>
    <property type="project" value="UniProtKB-KW"/>
</dbReference>
<dbReference type="GO" id="GO:0006357">
    <property type="term" value="P:regulation of transcription by RNA polymerase II"/>
    <property type="evidence" value="ECO:0000318"/>
    <property type="project" value="GO_Central"/>
</dbReference>
<dbReference type="GO" id="GO:0031509">
    <property type="term" value="P:subtelomeric heterochromatin formation"/>
    <property type="evidence" value="ECO:0007669"/>
    <property type="project" value="EnsemblFungi"/>
</dbReference>
<dbReference type="CDD" id="cd16908">
    <property type="entry name" value="YEATS_Yaf9_like"/>
    <property type="match status" value="1"/>
</dbReference>
<dbReference type="Gene3D" id="2.60.40.1970">
    <property type="entry name" value="YEATS domain"/>
    <property type="match status" value="1"/>
</dbReference>
<dbReference type="InterPro" id="IPR038704">
    <property type="entry name" value="YEAST_sf"/>
</dbReference>
<dbReference type="InterPro" id="IPR005033">
    <property type="entry name" value="YEATS"/>
</dbReference>
<dbReference type="InterPro" id="IPR055129">
    <property type="entry name" value="YEATS_dom"/>
</dbReference>
<dbReference type="PANTHER" id="PTHR47573">
    <property type="entry name" value="PROTEIN AF-9 HOMOLOG"/>
    <property type="match status" value="1"/>
</dbReference>
<dbReference type="PANTHER" id="PTHR47573:SF1">
    <property type="entry name" value="PROTEIN AF-9 HOMOLOG"/>
    <property type="match status" value="1"/>
</dbReference>
<dbReference type="Pfam" id="PF03366">
    <property type="entry name" value="YEATS"/>
    <property type="match status" value="1"/>
</dbReference>
<dbReference type="PROSITE" id="PS51037">
    <property type="entry name" value="YEATS"/>
    <property type="match status" value="1"/>
</dbReference>
<protein>
    <recommendedName>
        <fullName>Protein AF-9 homolog</fullName>
    </recommendedName>
</protein>
<sequence>MPSATGTKRVRGVSIFRPFVFGSEAQPFDPATKPSNVSSDHTHQWRVYVRGVNGEDISYWIKKVQFKLHETYVQNVRTVEHPPYEVTETGWGEFEIQIKIYFVPESMEKPQTLWHSLKLHPYGPDAEGKKERREVVVSQNYEEVVFNEPVEQFYDYLTGGSGTQQMQKGKSGKNAKQAQQQRGGRTAEIPFNETPENPYSRTAENKELDRLAEANKTVEQMIKDEKERLIAREKRLAELRASEGVPAQPLKKSFSGRIPVHSQQRMAGTVGPPDS</sequence>
<feature type="chain" id="PRO_0000215927" description="Protein AF-9 homolog">
    <location>
        <begin position="1"/>
        <end position="275"/>
    </location>
</feature>
<feature type="domain" description="YEATS" evidence="3">
    <location>
        <begin position="9"/>
        <end position="160"/>
    </location>
</feature>
<feature type="region of interest" description="Disordered" evidence="4">
    <location>
        <begin position="161"/>
        <end position="207"/>
    </location>
</feature>
<feature type="region of interest" description="Disordered" evidence="4">
    <location>
        <begin position="239"/>
        <end position="275"/>
    </location>
</feature>
<feature type="coiled-coil region" evidence="2">
    <location>
        <begin position="202"/>
        <end position="242"/>
    </location>
</feature>
<feature type="compositionally biased region" description="Polar residues" evidence="4">
    <location>
        <begin position="163"/>
        <end position="183"/>
    </location>
</feature>
<proteinExistence type="inferred from homology"/>
<gene>
    <name type="primary">yaf9</name>
    <name type="ORF">AN1859</name>
</gene>
<organism>
    <name type="scientific">Emericella nidulans (strain FGSC A4 / ATCC 38163 / CBS 112.46 / NRRL 194 / M139)</name>
    <name type="common">Aspergillus nidulans</name>
    <dbReference type="NCBI Taxonomy" id="227321"/>
    <lineage>
        <taxon>Eukaryota</taxon>
        <taxon>Fungi</taxon>
        <taxon>Dikarya</taxon>
        <taxon>Ascomycota</taxon>
        <taxon>Pezizomycotina</taxon>
        <taxon>Eurotiomycetes</taxon>
        <taxon>Eurotiomycetidae</taxon>
        <taxon>Eurotiales</taxon>
        <taxon>Aspergillaceae</taxon>
        <taxon>Aspergillus</taxon>
        <taxon>Aspergillus subgen. Nidulantes</taxon>
    </lineage>
</organism>